<name>ARGB_SINMW</name>
<keyword id="KW-0028">Amino-acid biosynthesis</keyword>
<keyword id="KW-0055">Arginine biosynthesis</keyword>
<keyword id="KW-0067">ATP-binding</keyword>
<keyword id="KW-0963">Cytoplasm</keyword>
<keyword id="KW-0418">Kinase</keyword>
<keyword id="KW-0547">Nucleotide-binding</keyword>
<keyword id="KW-0808">Transferase</keyword>
<gene>
    <name evidence="1" type="primary">argB</name>
    <name type="ordered locus">Smed_0075</name>
</gene>
<accession>A6U5K5</accession>
<proteinExistence type="inferred from homology"/>
<organism>
    <name type="scientific">Sinorhizobium medicae (strain WSM419)</name>
    <name type="common">Ensifer medicae</name>
    <dbReference type="NCBI Taxonomy" id="366394"/>
    <lineage>
        <taxon>Bacteria</taxon>
        <taxon>Pseudomonadati</taxon>
        <taxon>Pseudomonadota</taxon>
        <taxon>Alphaproteobacteria</taxon>
        <taxon>Hyphomicrobiales</taxon>
        <taxon>Rhizobiaceae</taxon>
        <taxon>Sinorhizobium/Ensifer group</taxon>
        <taxon>Sinorhizobium</taxon>
    </lineage>
</organism>
<feature type="chain" id="PRO_1000010546" description="Acetylglutamate kinase">
    <location>
        <begin position="1"/>
        <end position="295"/>
    </location>
</feature>
<feature type="binding site" evidence="1">
    <location>
        <begin position="66"/>
        <end position="67"/>
    </location>
    <ligand>
        <name>substrate</name>
    </ligand>
</feature>
<feature type="binding site" evidence="1">
    <location>
        <position position="88"/>
    </location>
    <ligand>
        <name>substrate</name>
    </ligand>
</feature>
<feature type="binding site" evidence="1">
    <location>
        <position position="193"/>
    </location>
    <ligand>
        <name>substrate</name>
    </ligand>
</feature>
<feature type="site" description="Transition state stabilizer" evidence="1">
    <location>
        <position position="31"/>
    </location>
</feature>
<feature type="site" description="Transition state stabilizer" evidence="1">
    <location>
        <position position="253"/>
    </location>
</feature>
<protein>
    <recommendedName>
        <fullName evidence="1">Acetylglutamate kinase</fullName>
        <ecNumber evidence="1">2.7.2.8</ecNumber>
    </recommendedName>
    <alternativeName>
        <fullName evidence="1">N-acetyl-L-glutamate 5-phosphotransferase</fullName>
    </alternativeName>
    <alternativeName>
        <fullName evidence="1">NAG kinase</fullName>
        <shortName evidence="1">NAGK</shortName>
    </alternativeName>
</protein>
<evidence type="ECO:0000255" key="1">
    <source>
        <dbReference type="HAMAP-Rule" id="MF_00082"/>
    </source>
</evidence>
<reference key="1">
    <citation type="submission" date="2007-06" db="EMBL/GenBank/DDBJ databases">
        <title>Complete sequence of Sinorhizobium medicae WSM419 chromosome.</title>
        <authorList>
            <consortium name="US DOE Joint Genome Institute"/>
            <person name="Copeland A."/>
            <person name="Lucas S."/>
            <person name="Lapidus A."/>
            <person name="Barry K."/>
            <person name="Glavina del Rio T."/>
            <person name="Dalin E."/>
            <person name="Tice H."/>
            <person name="Pitluck S."/>
            <person name="Chain P."/>
            <person name="Malfatti S."/>
            <person name="Shin M."/>
            <person name="Vergez L."/>
            <person name="Schmutz J."/>
            <person name="Larimer F."/>
            <person name="Land M."/>
            <person name="Hauser L."/>
            <person name="Kyrpides N."/>
            <person name="Mikhailova N."/>
            <person name="Reeve W.G."/>
            <person name="Richardson P."/>
        </authorList>
    </citation>
    <scope>NUCLEOTIDE SEQUENCE [LARGE SCALE GENOMIC DNA]</scope>
    <source>
        <strain>WSM419</strain>
    </source>
</reference>
<sequence>MSASESEIQARLLAQALPYMQRYENKTIVVKYGGHAMGNAELGRAFASDVALLKQSGVNPIVVHGGGPQIGAMLNKMGIESKFEGGLRVTDEKTVEIVEMVLAGSINKEIVALINQTGEWAIGLCGKDGNMVFAEKAKKTIRDPDSNIERVLDLGFVGDVVEVDRTLLDLLARSEMIPVIAPVAPGRDGHTYNINADTFAGAIAGALNATRLLFLTDVPGVLNKKGELIKQLSVAEARALIADGTISGGMIPKVETCIEAIGAGVQGVVILNGKTAHAVLLEIFTEHGAGTLIVP</sequence>
<dbReference type="EC" id="2.7.2.8" evidence="1"/>
<dbReference type="EMBL" id="CP000738">
    <property type="protein sequence ID" value="ABR58935.1"/>
    <property type="molecule type" value="Genomic_DNA"/>
</dbReference>
<dbReference type="RefSeq" id="WP_011974289.1">
    <property type="nucleotide sequence ID" value="NC_009636.1"/>
</dbReference>
<dbReference type="RefSeq" id="YP_001325770.1">
    <property type="nucleotide sequence ID" value="NC_009636.1"/>
</dbReference>
<dbReference type="SMR" id="A6U5K5"/>
<dbReference type="STRING" id="366394.Smed_0075"/>
<dbReference type="GeneID" id="61611202"/>
<dbReference type="KEGG" id="smd:Smed_0075"/>
<dbReference type="PATRIC" id="fig|366394.8.peg.3131"/>
<dbReference type="eggNOG" id="COG0548">
    <property type="taxonomic scope" value="Bacteria"/>
</dbReference>
<dbReference type="HOGENOM" id="CLU_053680_0_0_5"/>
<dbReference type="OrthoDB" id="9803155at2"/>
<dbReference type="UniPathway" id="UPA00068">
    <property type="reaction ID" value="UER00107"/>
</dbReference>
<dbReference type="Proteomes" id="UP000001108">
    <property type="component" value="Chromosome"/>
</dbReference>
<dbReference type="GO" id="GO:0005737">
    <property type="term" value="C:cytoplasm"/>
    <property type="evidence" value="ECO:0007669"/>
    <property type="project" value="UniProtKB-SubCell"/>
</dbReference>
<dbReference type="GO" id="GO:0003991">
    <property type="term" value="F:acetylglutamate kinase activity"/>
    <property type="evidence" value="ECO:0007669"/>
    <property type="project" value="UniProtKB-UniRule"/>
</dbReference>
<dbReference type="GO" id="GO:0005524">
    <property type="term" value="F:ATP binding"/>
    <property type="evidence" value="ECO:0007669"/>
    <property type="project" value="UniProtKB-UniRule"/>
</dbReference>
<dbReference type="GO" id="GO:0042450">
    <property type="term" value="P:arginine biosynthetic process via ornithine"/>
    <property type="evidence" value="ECO:0007669"/>
    <property type="project" value="UniProtKB-UniRule"/>
</dbReference>
<dbReference type="GO" id="GO:0006526">
    <property type="term" value="P:L-arginine biosynthetic process"/>
    <property type="evidence" value="ECO:0007669"/>
    <property type="project" value="UniProtKB-UniPathway"/>
</dbReference>
<dbReference type="CDD" id="cd04250">
    <property type="entry name" value="AAK_NAGK-C"/>
    <property type="match status" value="1"/>
</dbReference>
<dbReference type="FunFam" id="3.40.1160.10:FF:000004">
    <property type="entry name" value="Acetylglutamate kinase"/>
    <property type="match status" value="1"/>
</dbReference>
<dbReference type="Gene3D" id="3.40.1160.10">
    <property type="entry name" value="Acetylglutamate kinase-like"/>
    <property type="match status" value="1"/>
</dbReference>
<dbReference type="HAMAP" id="MF_00082">
    <property type="entry name" value="ArgB"/>
    <property type="match status" value="1"/>
</dbReference>
<dbReference type="InterPro" id="IPR036393">
    <property type="entry name" value="AceGlu_kinase-like_sf"/>
</dbReference>
<dbReference type="InterPro" id="IPR004662">
    <property type="entry name" value="AcgluKinase_fam"/>
</dbReference>
<dbReference type="InterPro" id="IPR037528">
    <property type="entry name" value="ArgB"/>
</dbReference>
<dbReference type="InterPro" id="IPR001048">
    <property type="entry name" value="Asp/Glu/Uridylate_kinase"/>
</dbReference>
<dbReference type="InterPro" id="IPR001057">
    <property type="entry name" value="Glu/AcGlu_kinase"/>
</dbReference>
<dbReference type="InterPro" id="IPR041727">
    <property type="entry name" value="NAGK-C"/>
</dbReference>
<dbReference type="NCBIfam" id="TIGR00761">
    <property type="entry name" value="argB"/>
    <property type="match status" value="1"/>
</dbReference>
<dbReference type="PANTHER" id="PTHR23342">
    <property type="entry name" value="N-ACETYLGLUTAMATE SYNTHASE"/>
    <property type="match status" value="1"/>
</dbReference>
<dbReference type="PANTHER" id="PTHR23342:SF0">
    <property type="entry name" value="N-ACETYLGLUTAMATE SYNTHASE, MITOCHONDRIAL"/>
    <property type="match status" value="1"/>
</dbReference>
<dbReference type="Pfam" id="PF00696">
    <property type="entry name" value="AA_kinase"/>
    <property type="match status" value="1"/>
</dbReference>
<dbReference type="PIRSF" id="PIRSF000728">
    <property type="entry name" value="NAGK"/>
    <property type="match status" value="1"/>
</dbReference>
<dbReference type="PRINTS" id="PR00474">
    <property type="entry name" value="GLU5KINASE"/>
</dbReference>
<dbReference type="SUPFAM" id="SSF53633">
    <property type="entry name" value="Carbamate kinase-like"/>
    <property type="match status" value="1"/>
</dbReference>
<comment type="function">
    <text evidence="1">Catalyzes the ATP-dependent phosphorylation of N-acetyl-L-glutamate.</text>
</comment>
<comment type="catalytic activity">
    <reaction evidence="1">
        <text>N-acetyl-L-glutamate + ATP = N-acetyl-L-glutamyl 5-phosphate + ADP</text>
        <dbReference type="Rhea" id="RHEA:14629"/>
        <dbReference type="ChEBI" id="CHEBI:30616"/>
        <dbReference type="ChEBI" id="CHEBI:44337"/>
        <dbReference type="ChEBI" id="CHEBI:57936"/>
        <dbReference type="ChEBI" id="CHEBI:456216"/>
        <dbReference type="EC" id="2.7.2.8"/>
    </reaction>
</comment>
<comment type="pathway">
    <text evidence="1">Amino-acid biosynthesis; L-arginine biosynthesis; N(2)-acetyl-L-ornithine from L-glutamate: step 2/4.</text>
</comment>
<comment type="subcellular location">
    <subcellularLocation>
        <location evidence="1">Cytoplasm</location>
    </subcellularLocation>
</comment>
<comment type="similarity">
    <text evidence="1">Belongs to the acetylglutamate kinase family. ArgB subfamily.</text>
</comment>